<evidence type="ECO:0000255" key="1">
    <source>
        <dbReference type="PROSITE-ProRule" id="PRU00268"/>
    </source>
</evidence>
<evidence type="ECO:0000256" key="2">
    <source>
        <dbReference type="SAM" id="MobiDB-lite"/>
    </source>
</evidence>
<evidence type="ECO:0000303" key="3">
    <source>
    </source>
</evidence>
<evidence type="ECO:0000305" key="4"/>
<keyword id="KW-1185">Reference proteome</keyword>
<keyword id="KW-0687">Ribonucleoprotein</keyword>
<keyword id="KW-0689">Ribosomal protein</keyword>
<reference key="1">
    <citation type="journal article" date="2000" name="Nature">
        <title>Sequence and analysis of chromosome 3 of the plant Arabidopsis thaliana.</title>
        <authorList>
            <person name="Salanoubat M."/>
            <person name="Lemcke K."/>
            <person name="Rieger M."/>
            <person name="Ansorge W."/>
            <person name="Unseld M."/>
            <person name="Fartmann B."/>
            <person name="Valle G."/>
            <person name="Bloecker H."/>
            <person name="Perez-Alonso M."/>
            <person name="Obermaier B."/>
            <person name="Delseny M."/>
            <person name="Boutry M."/>
            <person name="Grivell L.A."/>
            <person name="Mache R."/>
            <person name="Puigdomenech P."/>
            <person name="De Simone V."/>
            <person name="Choisne N."/>
            <person name="Artiguenave F."/>
            <person name="Robert C."/>
            <person name="Brottier P."/>
            <person name="Wincker P."/>
            <person name="Cattolico L."/>
            <person name="Weissenbach J."/>
            <person name="Saurin W."/>
            <person name="Quetier F."/>
            <person name="Schaefer M."/>
            <person name="Mueller-Auer S."/>
            <person name="Gabel C."/>
            <person name="Fuchs M."/>
            <person name="Benes V."/>
            <person name="Wurmbach E."/>
            <person name="Drzonek H."/>
            <person name="Erfle H."/>
            <person name="Jordan N."/>
            <person name="Bangert S."/>
            <person name="Wiedelmann R."/>
            <person name="Kranz H."/>
            <person name="Voss H."/>
            <person name="Holland R."/>
            <person name="Brandt P."/>
            <person name="Nyakatura G."/>
            <person name="Vezzi A."/>
            <person name="D'Angelo M."/>
            <person name="Pallavicini A."/>
            <person name="Toppo S."/>
            <person name="Simionati B."/>
            <person name="Conrad A."/>
            <person name="Hornischer K."/>
            <person name="Kauer G."/>
            <person name="Loehnert T.-H."/>
            <person name="Nordsiek G."/>
            <person name="Reichelt J."/>
            <person name="Scharfe M."/>
            <person name="Schoen O."/>
            <person name="Bargues M."/>
            <person name="Terol J."/>
            <person name="Climent J."/>
            <person name="Navarro P."/>
            <person name="Collado C."/>
            <person name="Perez-Perez A."/>
            <person name="Ottenwaelder B."/>
            <person name="Duchemin D."/>
            <person name="Cooke R."/>
            <person name="Laudie M."/>
            <person name="Berger-Llauro C."/>
            <person name="Purnelle B."/>
            <person name="Masuy D."/>
            <person name="de Haan M."/>
            <person name="Maarse A.C."/>
            <person name="Alcaraz J.-P."/>
            <person name="Cottet A."/>
            <person name="Casacuberta E."/>
            <person name="Monfort A."/>
            <person name="Argiriou A."/>
            <person name="Flores M."/>
            <person name="Liguori R."/>
            <person name="Vitale D."/>
            <person name="Mannhaupt G."/>
            <person name="Haase D."/>
            <person name="Schoof H."/>
            <person name="Rudd S."/>
            <person name="Zaccaria P."/>
            <person name="Mewes H.-W."/>
            <person name="Mayer K.F.X."/>
            <person name="Kaul S."/>
            <person name="Town C.D."/>
            <person name="Koo H.L."/>
            <person name="Tallon L.J."/>
            <person name="Jenkins J."/>
            <person name="Rooney T."/>
            <person name="Rizzo M."/>
            <person name="Walts A."/>
            <person name="Utterback T."/>
            <person name="Fujii C.Y."/>
            <person name="Shea T.P."/>
            <person name="Creasy T.H."/>
            <person name="Haas B."/>
            <person name="Maiti R."/>
            <person name="Wu D."/>
            <person name="Peterson J."/>
            <person name="Van Aken S."/>
            <person name="Pai G."/>
            <person name="Militscher J."/>
            <person name="Sellers P."/>
            <person name="Gill J.E."/>
            <person name="Feldblyum T.V."/>
            <person name="Preuss D."/>
            <person name="Lin X."/>
            <person name="Nierman W.C."/>
            <person name="Salzberg S.L."/>
            <person name="White O."/>
            <person name="Venter J.C."/>
            <person name="Fraser C.M."/>
            <person name="Kaneko T."/>
            <person name="Nakamura Y."/>
            <person name="Sato S."/>
            <person name="Kato T."/>
            <person name="Asamizu E."/>
            <person name="Sasamoto S."/>
            <person name="Kimura T."/>
            <person name="Idesawa K."/>
            <person name="Kawashima K."/>
            <person name="Kishida Y."/>
            <person name="Kiyokawa C."/>
            <person name="Kohara M."/>
            <person name="Matsumoto M."/>
            <person name="Matsuno A."/>
            <person name="Muraki A."/>
            <person name="Nakayama S."/>
            <person name="Nakazaki N."/>
            <person name="Shinpo S."/>
            <person name="Takeuchi C."/>
            <person name="Wada T."/>
            <person name="Watanabe A."/>
            <person name="Yamada M."/>
            <person name="Yasuda M."/>
            <person name="Tabata S."/>
        </authorList>
    </citation>
    <scope>NUCLEOTIDE SEQUENCE [LARGE SCALE GENOMIC DNA]</scope>
    <source>
        <strain>cv. Columbia</strain>
    </source>
</reference>
<reference key="2">
    <citation type="journal article" date="2017" name="Plant J.">
        <title>Araport11: a complete reannotation of the Arabidopsis thaliana reference genome.</title>
        <authorList>
            <person name="Cheng C.Y."/>
            <person name="Krishnakumar V."/>
            <person name="Chan A.P."/>
            <person name="Thibaud-Nissen F."/>
            <person name="Schobel S."/>
            <person name="Town C.D."/>
        </authorList>
    </citation>
    <scope>GENOME REANNOTATION</scope>
    <source>
        <strain>cv. Columbia</strain>
    </source>
</reference>
<reference key="3">
    <citation type="journal article" date="2003" name="Science">
        <title>Empirical analysis of transcriptional activity in the Arabidopsis genome.</title>
        <authorList>
            <person name="Yamada K."/>
            <person name="Lim J."/>
            <person name="Dale J.M."/>
            <person name="Chen H."/>
            <person name="Shinn P."/>
            <person name="Palm C.J."/>
            <person name="Southwick A.M."/>
            <person name="Wu H.C."/>
            <person name="Kim C.J."/>
            <person name="Nguyen M."/>
            <person name="Pham P.K."/>
            <person name="Cheuk R.F."/>
            <person name="Karlin-Newmann G."/>
            <person name="Liu S.X."/>
            <person name="Lam B."/>
            <person name="Sakano H."/>
            <person name="Wu T."/>
            <person name="Yu G."/>
            <person name="Miranda M."/>
            <person name="Quach H.L."/>
            <person name="Tripp M."/>
            <person name="Chang C.H."/>
            <person name="Lee J.M."/>
            <person name="Toriumi M.J."/>
            <person name="Chan M.M."/>
            <person name="Tang C.C."/>
            <person name="Onodera C.S."/>
            <person name="Deng J.M."/>
            <person name="Akiyama K."/>
            <person name="Ansari Y."/>
            <person name="Arakawa T."/>
            <person name="Banh J."/>
            <person name="Banno F."/>
            <person name="Bowser L."/>
            <person name="Brooks S.Y."/>
            <person name="Carninci P."/>
            <person name="Chao Q."/>
            <person name="Choy N."/>
            <person name="Enju A."/>
            <person name="Goldsmith A.D."/>
            <person name="Gurjal M."/>
            <person name="Hansen N.F."/>
            <person name="Hayashizaki Y."/>
            <person name="Johnson-Hopson C."/>
            <person name="Hsuan V.W."/>
            <person name="Iida K."/>
            <person name="Karnes M."/>
            <person name="Khan S."/>
            <person name="Koesema E."/>
            <person name="Ishida J."/>
            <person name="Jiang P.X."/>
            <person name="Jones T."/>
            <person name="Kawai J."/>
            <person name="Kamiya A."/>
            <person name="Meyers C."/>
            <person name="Nakajima M."/>
            <person name="Narusaka M."/>
            <person name="Seki M."/>
            <person name="Sakurai T."/>
            <person name="Satou M."/>
            <person name="Tamse R."/>
            <person name="Vaysberg M."/>
            <person name="Wallender E.K."/>
            <person name="Wong C."/>
            <person name="Yamamura Y."/>
            <person name="Yuan S."/>
            <person name="Shinozaki K."/>
            <person name="Davis R.W."/>
            <person name="Theologis A."/>
            <person name="Ecker J.R."/>
        </authorList>
    </citation>
    <scope>NUCLEOTIDE SEQUENCE [LARGE SCALE MRNA]</scope>
    <source>
        <strain>cv. Columbia</strain>
    </source>
</reference>
<reference key="4">
    <citation type="submission" date="2002-03" db="EMBL/GenBank/DDBJ databases">
        <title>Full-length cDNA from Arabidopsis thaliana.</title>
        <authorList>
            <person name="Brover V.V."/>
            <person name="Troukhan M.E."/>
            <person name="Alexandrov N.A."/>
            <person name="Lu Y.-P."/>
            <person name="Flavell R.B."/>
            <person name="Feldmann K.A."/>
        </authorList>
    </citation>
    <scope>NUCLEOTIDE SEQUENCE [LARGE SCALE MRNA]</scope>
</reference>
<reference key="5">
    <citation type="submission" date="2006-07" db="EMBL/GenBank/DDBJ databases">
        <title>Large-scale analysis of RIKEN Arabidopsis full-length (RAFL) cDNAs.</title>
        <authorList>
            <person name="Totoki Y."/>
            <person name="Seki M."/>
            <person name="Ishida J."/>
            <person name="Nakajima M."/>
            <person name="Enju A."/>
            <person name="Kamiya A."/>
            <person name="Narusaka M."/>
            <person name="Shin-i T."/>
            <person name="Nakagawa M."/>
            <person name="Sakamoto N."/>
            <person name="Oishi K."/>
            <person name="Kohara Y."/>
            <person name="Kobayashi M."/>
            <person name="Toyoda A."/>
            <person name="Sakaki Y."/>
            <person name="Sakurai T."/>
            <person name="Iida K."/>
            <person name="Akiyama K."/>
            <person name="Satou M."/>
            <person name="Toyoda T."/>
            <person name="Konagaya A."/>
            <person name="Carninci P."/>
            <person name="Kawai J."/>
            <person name="Hayashizaki Y."/>
            <person name="Shinozaki K."/>
        </authorList>
    </citation>
    <scope>NUCLEOTIDE SEQUENCE [LARGE SCALE MRNA]</scope>
    <source>
        <strain>cv. Columbia</strain>
    </source>
</reference>
<reference key="6">
    <citation type="journal article" date="2001" name="Plant Physiol.">
        <title>The organization of cytoplasmic ribosomal protein genes in the Arabidopsis genome.</title>
        <authorList>
            <person name="Barakat A."/>
            <person name="Szick-Miranda K."/>
            <person name="Chang I.-F."/>
            <person name="Guyot R."/>
            <person name="Blanc G."/>
            <person name="Cooke R."/>
            <person name="Delseny M."/>
            <person name="Bailey-Serres J."/>
        </authorList>
    </citation>
    <scope>GENE FAMILY ORGANIZATION</scope>
    <scope>NOMENCLATURE</scope>
</reference>
<reference key="7">
    <citation type="journal article" date="2023" name="Plant Cell">
        <title>An updated nomenclature for plant ribosomal protein genes.</title>
        <authorList>
            <person name="Scarpin M.R."/>
            <person name="Busche M."/>
            <person name="Martinez R.E."/>
            <person name="Harper L.C."/>
            <person name="Reiser L."/>
            <person name="Szakonyi D."/>
            <person name="Merchante C."/>
            <person name="Lan T."/>
            <person name="Xiong W."/>
            <person name="Mo B."/>
            <person name="Tang G."/>
            <person name="Chen X."/>
            <person name="Bailey-Serres J."/>
            <person name="Browning K.S."/>
            <person name="Brunkard J.O."/>
        </authorList>
    </citation>
    <scope>NOMENCLATURE</scope>
</reference>
<gene>
    <name type="primary">RPS2D</name>
    <name type="ordered locus">At3g57490</name>
    <name type="ORF">T8H10.90</name>
</gene>
<comment type="similarity">
    <text evidence="4">Belongs to the universal ribosomal protein uS5 family.</text>
</comment>
<proteinExistence type="evidence at transcript level"/>
<dbReference type="EMBL" id="AL133248">
    <property type="protein sequence ID" value="CAB66106.1"/>
    <property type="molecule type" value="Genomic_DNA"/>
</dbReference>
<dbReference type="EMBL" id="CP002686">
    <property type="protein sequence ID" value="AEE79662.1"/>
    <property type="molecule type" value="Genomic_DNA"/>
</dbReference>
<dbReference type="EMBL" id="BT006200">
    <property type="protein sequence ID" value="AAP12849.1"/>
    <property type="molecule type" value="mRNA"/>
</dbReference>
<dbReference type="EMBL" id="AY084252">
    <property type="protein sequence ID" value="AAM60846.1"/>
    <property type="molecule type" value="mRNA"/>
</dbReference>
<dbReference type="EMBL" id="AK228054">
    <property type="protein sequence ID" value="BAF00015.1"/>
    <property type="molecule type" value="mRNA"/>
</dbReference>
<dbReference type="PIR" id="T46185">
    <property type="entry name" value="T46185"/>
</dbReference>
<dbReference type="RefSeq" id="NP_191308.1">
    <property type="nucleotide sequence ID" value="NM_115609.3"/>
</dbReference>
<dbReference type="SMR" id="Q9SCM3"/>
<dbReference type="BioGRID" id="10232">
    <property type="interactions" value="108"/>
</dbReference>
<dbReference type="FunCoup" id="Q9SCM3">
    <property type="interactions" value="3593"/>
</dbReference>
<dbReference type="IntAct" id="Q9SCM3">
    <property type="interactions" value="2"/>
</dbReference>
<dbReference type="STRING" id="3702.Q9SCM3"/>
<dbReference type="iPTMnet" id="Q9SCM3"/>
<dbReference type="PaxDb" id="3702-AT3G57490.1"/>
<dbReference type="ProteomicsDB" id="226549"/>
<dbReference type="EnsemblPlants" id="AT3G57490.1">
    <property type="protein sequence ID" value="AT3G57490.1"/>
    <property type="gene ID" value="AT3G57490"/>
</dbReference>
<dbReference type="GeneID" id="824916"/>
<dbReference type="Gramene" id="AT3G57490.1">
    <property type="protein sequence ID" value="AT3G57490.1"/>
    <property type="gene ID" value="AT3G57490"/>
</dbReference>
<dbReference type="KEGG" id="ath:AT3G57490"/>
<dbReference type="Araport" id="AT3G57490"/>
<dbReference type="TAIR" id="AT3G57490"/>
<dbReference type="eggNOG" id="KOG0877">
    <property type="taxonomic scope" value="Eukaryota"/>
</dbReference>
<dbReference type="HOGENOM" id="CLU_065898_0_2_1"/>
<dbReference type="InParanoid" id="Q9SCM3"/>
<dbReference type="OMA" id="DKEWTPV"/>
<dbReference type="PhylomeDB" id="Q9SCM3"/>
<dbReference type="CD-CODE" id="4299E36E">
    <property type="entry name" value="Nucleolus"/>
</dbReference>
<dbReference type="PRO" id="PR:Q9SCM3"/>
<dbReference type="Proteomes" id="UP000006548">
    <property type="component" value="Chromosome 3"/>
</dbReference>
<dbReference type="ExpressionAtlas" id="Q9SCM3">
    <property type="expression patterns" value="baseline and differential"/>
</dbReference>
<dbReference type="GO" id="GO:0005829">
    <property type="term" value="C:cytosol"/>
    <property type="evidence" value="ECO:0007005"/>
    <property type="project" value="TAIR"/>
</dbReference>
<dbReference type="GO" id="GO:0022627">
    <property type="term" value="C:cytosolic small ribosomal subunit"/>
    <property type="evidence" value="ECO:0007005"/>
    <property type="project" value="TAIR"/>
</dbReference>
<dbReference type="GO" id="GO:0009506">
    <property type="term" value="C:plasmodesma"/>
    <property type="evidence" value="ECO:0007005"/>
    <property type="project" value="TAIR"/>
</dbReference>
<dbReference type="GO" id="GO:0003729">
    <property type="term" value="F:mRNA binding"/>
    <property type="evidence" value="ECO:0000314"/>
    <property type="project" value="TAIR"/>
</dbReference>
<dbReference type="GO" id="GO:0003735">
    <property type="term" value="F:structural constituent of ribosome"/>
    <property type="evidence" value="ECO:0000314"/>
    <property type="project" value="CAFA"/>
</dbReference>
<dbReference type="GO" id="GO:0006412">
    <property type="term" value="P:translation"/>
    <property type="evidence" value="ECO:0007669"/>
    <property type="project" value="InterPro"/>
</dbReference>
<dbReference type="FunFam" id="3.30.160.20:FF:000002">
    <property type="entry name" value="40S ribosomal protein S2"/>
    <property type="match status" value="1"/>
</dbReference>
<dbReference type="FunFam" id="3.30.230.10:FF:000004">
    <property type="entry name" value="40S ribosomal protein S2"/>
    <property type="match status" value="1"/>
</dbReference>
<dbReference type="Gene3D" id="3.30.160.20">
    <property type="match status" value="1"/>
</dbReference>
<dbReference type="Gene3D" id="3.30.230.10">
    <property type="match status" value="1"/>
</dbReference>
<dbReference type="InterPro" id="IPR020568">
    <property type="entry name" value="Ribosomal_Su5_D2-typ_SF"/>
</dbReference>
<dbReference type="InterPro" id="IPR000851">
    <property type="entry name" value="Ribosomal_uS5"/>
</dbReference>
<dbReference type="InterPro" id="IPR005324">
    <property type="entry name" value="Ribosomal_uS5_C"/>
</dbReference>
<dbReference type="InterPro" id="IPR005711">
    <property type="entry name" value="Ribosomal_uS5_euk/arc"/>
</dbReference>
<dbReference type="InterPro" id="IPR013810">
    <property type="entry name" value="Ribosomal_uS5_N"/>
</dbReference>
<dbReference type="InterPro" id="IPR018192">
    <property type="entry name" value="Ribosomal_uS5_N_CS"/>
</dbReference>
<dbReference type="InterPro" id="IPR014721">
    <property type="entry name" value="Ribsml_uS5_D2-typ_fold_subgr"/>
</dbReference>
<dbReference type="NCBIfam" id="TIGR01020">
    <property type="entry name" value="uS5_euk_arch"/>
    <property type="match status" value="1"/>
</dbReference>
<dbReference type="PANTHER" id="PTHR13718">
    <property type="entry name" value="RIBOSOMAL S SUBUNIT"/>
    <property type="match status" value="1"/>
</dbReference>
<dbReference type="PANTHER" id="PTHR13718:SF115">
    <property type="entry name" value="SMALL RIBOSOMAL SUBUNIT PROTEIN US5W-RELATED"/>
    <property type="match status" value="1"/>
</dbReference>
<dbReference type="Pfam" id="PF00333">
    <property type="entry name" value="Ribosomal_S5"/>
    <property type="match status" value="1"/>
</dbReference>
<dbReference type="Pfam" id="PF03719">
    <property type="entry name" value="Ribosomal_S5_C"/>
    <property type="match status" value="1"/>
</dbReference>
<dbReference type="SUPFAM" id="SSF54768">
    <property type="entry name" value="dsRNA-binding domain-like"/>
    <property type="match status" value="1"/>
</dbReference>
<dbReference type="SUPFAM" id="SSF54211">
    <property type="entry name" value="Ribosomal protein S5 domain 2-like"/>
    <property type="match status" value="1"/>
</dbReference>
<dbReference type="PROSITE" id="PS00585">
    <property type="entry name" value="RIBOSOMAL_S5"/>
    <property type="match status" value="1"/>
</dbReference>
<dbReference type="PROSITE" id="PS50881">
    <property type="entry name" value="S5_DSRBD"/>
    <property type="match status" value="1"/>
</dbReference>
<protein>
    <recommendedName>
        <fullName evidence="3">Small ribosomal subunit protein uS5w</fullName>
    </recommendedName>
    <alternativeName>
        <fullName>40S ribosomal protein S2-4</fullName>
    </alternativeName>
</protein>
<organism>
    <name type="scientific">Arabidopsis thaliana</name>
    <name type="common">Mouse-ear cress</name>
    <dbReference type="NCBI Taxonomy" id="3702"/>
    <lineage>
        <taxon>Eukaryota</taxon>
        <taxon>Viridiplantae</taxon>
        <taxon>Streptophyta</taxon>
        <taxon>Embryophyta</taxon>
        <taxon>Tracheophyta</taxon>
        <taxon>Spermatophyta</taxon>
        <taxon>Magnoliopsida</taxon>
        <taxon>eudicotyledons</taxon>
        <taxon>Gunneridae</taxon>
        <taxon>Pentapetalae</taxon>
        <taxon>rosids</taxon>
        <taxon>malvids</taxon>
        <taxon>Brassicales</taxon>
        <taxon>Brassicaceae</taxon>
        <taxon>Camelineae</taxon>
        <taxon>Arabidopsis</taxon>
    </lineage>
</organism>
<sequence length="276" mass="30116">MAERGVERGGDRGDFGRGFGGRGGGRGGPRGRGRRAGRAPEEEKWVPVTKLGRLVKEGKITKIEQIYLHSLPVKEYQIIDLLVGPSLKDEVMKIMPVQKQTRAGQRTRFKAFIVVGDSNGHVGLGVKCSKEVATAIRGAIILAKLSVVPIRRGYWGNKIGKPHTVPCKVTGKCGSVTVRMVPAPRGSGIVAARVPKKVLQFAGIDDVFTSSRGSTKTLGNFVKATFDCLQKTYGFLTPEFWKETRFSKSPYQEHTDFLLIPPGVKISEVVVDKSVE</sequence>
<accession>Q9SCM3</accession>
<name>RS24_ARATH</name>
<feature type="chain" id="PRO_0000250176" description="Small ribosomal subunit protein uS5w">
    <location>
        <begin position="1"/>
        <end position="276"/>
    </location>
</feature>
<feature type="domain" description="S5 DRBM" evidence="1">
    <location>
        <begin position="87"/>
        <end position="150"/>
    </location>
</feature>
<feature type="region of interest" description="Disordered" evidence="2">
    <location>
        <begin position="1"/>
        <end position="42"/>
    </location>
</feature>
<feature type="compositionally biased region" description="Basic and acidic residues" evidence="2">
    <location>
        <begin position="1"/>
        <end position="15"/>
    </location>
</feature>
<feature type="compositionally biased region" description="Gly residues" evidence="2">
    <location>
        <begin position="16"/>
        <end position="28"/>
    </location>
</feature>